<comment type="function">
    <text>IRBP shuttles 11-cis and all trans retinoids between the retinol isomerase in the pigment epithelium and the visual pigments in the photoreceptor cells of the retina.</text>
</comment>
<comment type="subcellular location">
    <subcellularLocation>
        <location>Secreted</location>
        <location>Extracellular space</location>
        <location>Extracellular matrix</location>
        <location>Interphotoreceptor matrix</location>
    </subcellularLocation>
    <text>Interphotoreceptor matrix that permeates the space between the retina and the contiguous layer of pigment epithelium cells.</text>
</comment>
<dbReference type="PIR" id="B24417">
    <property type="entry name" value="B24417"/>
</dbReference>
<dbReference type="STRING" id="9823.ENSSSCP00000011062"/>
<dbReference type="PaxDb" id="9823-ENSSSCP00000011062"/>
<dbReference type="PeptideAtlas" id="P12662"/>
<dbReference type="eggNOG" id="ENOG502QW81">
    <property type="taxonomic scope" value="Eukaryota"/>
</dbReference>
<dbReference type="InParanoid" id="P12662"/>
<dbReference type="Proteomes" id="UP000008227">
    <property type="component" value="Unplaced"/>
</dbReference>
<dbReference type="Proteomes" id="UP000314985">
    <property type="component" value="Unplaced"/>
</dbReference>
<dbReference type="Proteomes" id="UP000694570">
    <property type="component" value="Unplaced"/>
</dbReference>
<dbReference type="Proteomes" id="UP000694571">
    <property type="component" value="Unplaced"/>
</dbReference>
<dbReference type="Proteomes" id="UP000694720">
    <property type="component" value="Unplaced"/>
</dbReference>
<dbReference type="Proteomes" id="UP000694722">
    <property type="component" value="Unplaced"/>
</dbReference>
<dbReference type="Proteomes" id="UP000694723">
    <property type="component" value="Unplaced"/>
</dbReference>
<dbReference type="Proteomes" id="UP000694724">
    <property type="component" value="Unplaced"/>
</dbReference>
<dbReference type="Proteomes" id="UP000694725">
    <property type="component" value="Unplaced"/>
</dbReference>
<dbReference type="Proteomes" id="UP000694726">
    <property type="component" value="Unplaced"/>
</dbReference>
<dbReference type="Proteomes" id="UP000694727">
    <property type="component" value="Unplaced"/>
</dbReference>
<dbReference type="Proteomes" id="UP000694728">
    <property type="component" value="Unplaced"/>
</dbReference>
<dbReference type="GO" id="GO:0005576">
    <property type="term" value="C:extracellular region"/>
    <property type="evidence" value="ECO:0007669"/>
    <property type="project" value="UniProtKB-KW"/>
</dbReference>
<dbReference type="GO" id="GO:0033165">
    <property type="term" value="C:interphotoreceptor matrix"/>
    <property type="evidence" value="ECO:0007669"/>
    <property type="project" value="UniProtKB-SubCell"/>
</dbReference>
<dbReference type="GO" id="GO:0016918">
    <property type="term" value="F:retinal binding"/>
    <property type="evidence" value="ECO:0007669"/>
    <property type="project" value="UniProtKB-KW"/>
</dbReference>
<reference key="1">
    <citation type="journal article" date="1986" name="FEBS Lett.">
        <title>N-terminal sequence homologies in interstitial retinol-binding proteins from 10 vertebrate species.</title>
        <authorList>
            <person name="Fong S.-L."/>
            <person name="Cook R.G."/>
            <person name="Alvarez R.A."/>
            <person name="Liou G.I."/>
            <person name="Landers R.A."/>
            <person name="Bridges C.D.B."/>
        </authorList>
    </citation>
    <scope>PROTEIN SEQUENCE</scope>
</reference>
<proteinExistence type="evidence at protein level"/>
<accession>P12662</accession>
<organism>
    <name type="scientific">Sus scrofa</name>
    <name type="common">Pig</name>
    <dbReference type="NCBI Taxonomy" id="9823"/>
    <lineage>
        <taxon>Eukaryota</taxon>
        <taxon>Metazoa</taxon>
        <taxon>Chordata</taxon>
        <taxon>Craniata</taxon>
        <taxon>Vertebrata</taxon>
        <taxon>Euteleostomi</taxon>
        <taxon>Mammalia</taxon>
        <taxon>Eutheria</taxon>
        <taxon>Laurasiatheria</taxon>
        <taxon>Artiodactyla</taxon>
        <taxon>Suina</taxon>
        <taxon>Suidae</taxon>
        <taxon>Sus</taxon>
    </lineage>
</organism>
<protein>
    <recommendedName>
        <fullName>Retinol-binding protein 3</fullName>
    </recommendedName>
    <alternativeName>
        <fullName>Interphotoreceptor retinoid-binding protein</fullName>
        <shortName>IRBP</shortName>
    </alternativeName>
    <alternativeName>
        <fullName>Interstitial retinol-binding protein</fullName>
    </alternativeName>
</protein>
<feature type="chain" id="PRO_0000084230" description="Retinol-binding protein 3">
    <location>
        <begin position="1"/>
        <end position="25" status="greater than"/>
    </location>
</feature>
<feature type="non-terminal residue">
    <location>
        <position position="25"/>
    </location>
</feature>
<gene>
    <name type="primary">RBP3</name>
</gene>
<keyword id="KW-0903">Direct protein sequencing</keyword>
<keyword id="KW-0272">Extracellular matrix</keyword>
<keyword id="KW-1185">Reference proteome</keyword>
<keyword id="KW-0964">Secreted</keyword>
<keyword id="KW-0813">Transport</keyword>
<keyword id="KW-0845">Vitamin A</keyword>
<name>RET3_PIG</name>
<sequence>FQPSLVLDTAKILLDNYTFPESLMG</sequence>